<name>ANM3_HUMAN</name>
<protein>
    <recommendedName>
        <fullName evidence="21">Protein arginine N-methyltransferase 3</fullName>
        <ecNumber evidence="18 19 20 21 22">2.1.1.319</ecNumber>
    </recommendedName>
    <alternativeName>
        <fullName evidence="23">Heterogeneous nuclear ribonucleoprotein methyltransferase-like protein 3</fullName>
    </alternativeName>
</protein>
<feature type="initiator methionine" description="Removed" evidence="28 32 33">
    <location>
        <position position="1"/>
    </location>
</feature>
<feature type="chain" id="PRO_0000212326" description="Protein arginine N-methyltransferase 3">
    <location>
        <begin position="2"/>
        <end position="531"/>
    </location>
</feature>
<feature type="domain" description="SAM-dependent MTase PRMT-type" evidence="3">
    <location>
        <begin position="217"/>
        <end position="531"/>
    </location>
</feature>
<feature type="zinc finger region" description="C2H2-type">
    <location>
        <begin position="48"/>
        <end position="71"/>
    </location>
</feature>
<feature type="region of interest" description="Disordered" evidence="4">
    <location>
        <begin position="1"/>
        <end position="43"/>
    </location>
</feature>
<feature type="region of interest" description="Interaction with ZNF200" evidence="13">
    <location>
        <begin position="48"/>
        <end position="71"/>
    </location>
</feature>
<feature type="region of interest" description="Mediates interaction with ALDH1A1" evidence="12">
    <location>
        <begin position="186"/>
        <end position="531"/>
    </location>
</feature>
<feature type="compositionally biased region" description="Acidic residues" evidence="4">
    <location>
        <begin position="16"/>
        <end position="39"/>
    </location>
</feature>
<feature type="active site" evidence="1">
    <location>
        <position position="329"/>
    </location>
</feature>
<feature type="active site" evidence="1">
    <location>
        <position position="338"/>
    </location>
</feature>
<feature type="binding site" evidence="15 24">
    <location>
        <position position="239"/>
    </location>
    <ligand>
        <name>S-adenosyl-L-homocysteine</name>
        <dbReference type="ChEBI" id="CHEBI:57856"/>
    </ligand>
</feature>
<feature type="binding site" evidence="15 24">
    <location>
        <position position="263"/>
    </location>
    <ligand>
        <name>S-adenosyl-L-homocysteine</name>
        <dbReference type="ChEBI" id="CHEBI:57856"/>
    </ligand>
</feature>
<feature type="binding site" evidence="15 24">
    <location>
        <position position="285"/>
    </location>
    <ligand>
        <name>S-adenosyl-L-homocysteine</name>
        <dbReference type="ChEBI" id="CHEBI:57856"/>
    </ligand>
</feature>
<feature type="binding site" evidence="15 24">
    <location>
        <position position="313"/>
    </location>
    <ligand>
        <name>S-adenosyl-L-homocysteine</name>
        <dbReference type="ChEBI" id="CHEBI:57856"/>
    </ligand>
</feature>
<feature type="binding site" evidence="15 24">
    <location>
        <position position="314"/>
    </location>
    <ligand>
        <name>S-adenosyl-L-homocysteine</name>
        <dbReference type="ChEBI" id="CHEBI:57856"/>
    </ligand>
</feature>
<feature type="binding site" evidence="15 24">
    <location>
        <position position="343"/>
    </location>
    <ligand>
        <name>S-adenosyl-L-homocysteine</name>
        <dbReference type="ChEBI" id="CHEBI:57856"/>
    </ligand>
</feature>
<feature type="site" description="Not phosphorylated" evidence="6">
    <location>
        <position position="87"/>
    </location>
</feature>
<feature type="modified residue" description="N-acetylcysteine" evidence="28 32 33">
    <location>
        <position position="2"/>
    </location>
</feature>
<feature type="modified residue" description="Phosphoserine" evidence="6 29 30 31 34">
    <location>
        <position position="25"/>
    </location>
</feature>
<feature type="modified residue" description="Phosphoserine" evidence="6 30 31 34">
    <location>
        <position position="27"/>
    </location>
</feature>
<feature type="modified residue" description="Phosphoserine" evidence="34">
    <location>
        <position position="171"/>
    </location>
</feature>
<feature type="splice variant" id="VSP_040330" description="In isoform 2." evidence="16">
    <original>GRGAVENEEDLPELSDSGDEAAWEDEDDADLPHGKQQTPCLFCNRLFTSAEETFSHCKSEHQFNIDSMVHKHGLEFYGYIKLINFIRLK</original>
    <variation>YSHLLKKHFHTVSLSISLILTAWFINM</variation>
    <location>
        <begin position="11"/>
        <end position="99"/>
    </location>
</feature>
<feature type="sequence variant" id="VAR_024584" description="In dbSNP:rs3758805.">
    <original>L</original>
    <variation>V</variation>
    <location>
        <position position="440"/>
    </location>
</feature>
<feature type="sequence variant" id="VAR_030943" description="In dbSNP:rs11025585.">
    <original>S</original>
    <variation>C</variation>
    <location>
        <position position="470"/>
    </location>
</feature>
<feature type="sequence variant" id="VAR_024585" description="In dbSNP:rs6483700.">
    <original>N</original>
    <variation>S</variation>
    <location>
        <position position="508"/>
    </location>
</feature>
<feature type="mutagenesis site" description="Markedly reduced affinity for RPS2." evidence="6">
    <original>Y</original>
    <variation>C</variation>
    <location>
        <position position="87"/>
    </location>
</feature>
<feature type="mutagenesis site" description="Markedly reduced affinity for RPS2." evidence="6">
    <original>Y</original>
    <variation>E</variation>
    <location>
        <position position="87"/>
    </location>
</feature>
<feature type="mutagenesis site" description="No effect on interaction with RPS2." evidence="6">
    <original>Y</original>
    <variation>F</variation>
    <location>
        <position position="87"/>
    </location>
</feature>
<feature type="mutagenesis site" description="Loss of catalytic activity. No effect on ALDH1A1 activity regulation." evidence="9 12">
    <original>E</original>
    <variation>Q</variation>
    <location>
        <position position="338"/>
    </location>
</feature>
<feature type="mutagenesis site" description="Reduces catalytic activity." evidence="7">
    <original>V</original>
    <variation>W</variation>
    <location>
        <position position="403"/>
    </location>
</feature>
<feature type="mutagenesis site" description="Loss of interaction with ALDH1A1." evidence="12">
    <original>H</original>
    <variation>A</variation>
    <location>
        <position position="464"/>
    </location>
</feature>
<feature type="mutagenesis site" description="Loss of interaction with ALDH1A1." evidence="12">
    <original>N</original>
    <variation>A</variation>
    <location>
        <position position="465"/>
    </location>
</feature>
<feature type="mutagenesis site" description="Loss of interaction with ALDH1A1." evidence="12">
    <original>R</original>
    <variation>A</variation>
    <location>
        <position position="466"/>
    </location>
</feature>
<feature type="mutagenesis site" description="Loss of interaction with ALDH1A1." evidence="12">
    <original>V</original>
    <variation>A</variation>
    <location>
        <position position="468"/>
    </location>
</feature>
<feature type="sequence conflict" description="In Ref. 4; AAC39837." evidence="17" ref="4">
    <original>L</original>
    <variation>E</variation>
    <location>
        <position position="21"/>
    </location>
</feature>
<feature type="sequence conflict" description="In Ref. 1; BAG62289." evidence="17" ref="1">
    <original>V</original>
    <variation>F</variation>
    <location>
        <position position="103"/>
    </location>
</feature>
<feature type="sequence conflict" description="In Ref. 1; BAG62289." evidence="17" ref="1">
    <original>K</original>
    <variation>R</variation>
    <location>
        <position position="510"/>
    </location>
</feature>
<feature type="helix" evidence="35">
    <location>
        <begin position="223"/>
        <end position="225"/>
    </location>
</feature>
<feature type="helix" evidence="35">
    <location>
        <begin position="227"/>
        <end position="234"/>
    </location>
</feature>
<feature type="helix" evidence="35">
    <location>
        <begin position="237"/>
        <end position="249"/>
    </location>
</feature>
<feature type="helix" evidence="35">
    <location>
        <begin position="251"/>
        <end position="253"/>
    </location>
</feature>
<feature type="turn" evidence="35">
    <location>
        <begin position="254"/>
        <end position="256"/>
    </location>
</feature>
<feature type="strand" evidence="35">
    <location>
        <begin position="258"/>
        <end position="263"/>
    </location>
</feature>
<feature type="helix" evidence="35">
    <location>
        <begin position="268"/>
        <end position="275"/>
    </location>
</feature>
<feature type="strand" evidence="35">
    <location>
        <begin position="279"/>
        <end position="287"/>
    </location>
</feature>
<feature type="helix" evidence="35">
    <location>
        <begin position="289"/>
        <end position="299"/>
    </location>
</feature>
<feature type="turn" evidence="35">
    <location>
        <begin position="303"/>
        <end position="305"/>
    </location>
</feature>
<feature type="strand" evidence="35">
    <location>
        <begin position="306"/>
        <end position="311"/>
    </location>
</feature>
<feature type="turn" evidence="35">
    <location>
        <begin position="313"/>
        <end position="315"/>
    </location>
</feature>
<feature type="strand" evidence="36">
    <location>
        <begin position="319"/>
        <end position="321"/>
    </location>
</feature>
<feature type="strand" evidence="35">
    <location>
        <begin position="323"/>
        <end position="328"/>
    </location>
</feature>
<feature type="turn" evidence="35">
    <location>
        <begin position="336"/>
        <end position="338"/>
    </location>
</feature>
<feature type="helix" evidence="35">
    <location>
        <begin position="340"/>
        <end position="351"/>
    </location>
</feature>
<feature type="strand" evidence="35">
    <location>
        <begin position="352"/>
        <end position="360"/>
    </location>
</feature>
<feature type="strand" evidence="35">
    <location>
        <begin position="362"/>
        <end position="370"/>
    </location>
</feature>
<feature type="helix" evidence="35">
    <location>
        <begin position="373"/>
        <end position="379"/>
    </location>
</feature>
<feature type="helix" evidence="35">
    <location>
        <begin position="381"/>
        <end position="384"/>
    </location>
</feature>
<feature type="helix" evidence="35">
    <location>
        <begin position="392"/>
        <end position="394"/>
    </location>
</feature>
<feature type="helix" evidence="35">
    <location>
        <begin position="395"/>
        <end position="398"/>
    </location>
</feature>
<feature type="strand" evidence="35">
    <location>
        <begin position="403"/>
        <end position="405"/>
    </location>
</feature>
<feature type="helix" evidence="35">
    <location>
        <begin position="409"/>
        <end position="411"/>
    </location>
</feature>
<feature type="strand" evidence="35">
    <location>
        <begin position="417"/>
        <end position="423"/>
    </location>
</feature>
<feature type="turn" evidence="35">
    <location>
        <begin position="424"/>
        <end position="426"/>
    </location>
</feature>
<feature type="helix" evidence="35">
    <location>
        <begin position="429"/>
        <end position="432"/>
    </location>
</feature>
<feature type="strand" evidence="35">
    <location>
        <begin position="433"/>
        <end position="442"/>
    </location>
</feature>
<feature type="strand" evidence="35">
    <location>
        <begin position="446"/>
        <end position="459"/>
    </location>
</feature>
<feature type="strand" evidence="35">
    <location>
        <begin position="467"/>
        <end position="470"/>
    </location>
</feature>
<feature type="strand" evidence="35">
    <location>
        <begin position="482"/>
        <end position="493"/>
    </location>
</feature>
<feature type="strand" evidence="35">
    <location>
        <begin position="498"/>
        <end position="507"/>
    </location>
</feature>
<feature type="strand" evidence="35">
    <location>
        <begin position="514"/>
        <end position="521"/>
    </location>
</feature>
<feature type="strand" evidence="35">
    <location>
        <begin position="524"/>
        <end position="530"/>
    </location>
</feature>
<accession>O60678</accession>
<accession>A0A0A0MSN7</accession>
<accession>B4DUC7</accession>
<gene>
    <name evidence="23" type="primary">PRMT3</name>
    <name evidence="23" type="synonym">HRMT1L3</name>
</gene>
<reference key="1">
    <citation type="journal article" date="2004" name="Nat. Genet.">
        <title>Complete sequencing and characterization of 21,243 full-length human cDNAs.</title>
        <authorList>
            <person name="Ota T."/>
            <person name="Suzuki Y."/>
            <person name="Nishikawa T."/>
            <person name="Otsuki T."/>
            <person name="Sugiyama T."/>
            <person name="Irie R."/>
            <person name="Wakamatsu A."/>
            <person name="Hayashi K."/>
            <person name="Sato H."/>
            <person name="Nagai K."/>
            <person name="Kimura K."/>
            <person name="Makita H."/>
            <person name="Sekine M."/>
            <person name="Obayashi M."/>
            <person name="Nishi T."/>
            <person name="Shibahara T."/>
            <person name="Tanaka T."/>
            <person name="Ishii S."/>
            <person name="Yamamoto J."/>
            <person name="Saito K."/>
            <person name="Kawai Y."/>
            <person name="Isono Y."/>
            <person name="Nakamura Y."/>
            <person name="Nagahari K."/>
            <person name="Murakami K."/>
            <person name="Yasuda T."/>
            <person name="Iwayanagi T."/>
            <person name="Wagatsuma M."/>
            <person name="Shiratori A."/>
            <person name="Sudo H."/>
            <person name="Hosoiri T."/>
            <person name="Kaku Y."/>
            <person name="Kodaira H."/>
            <person name="Kondo H."/>
            <person name="Sugawara M."/>
            <person name="Takahashi M."/>
            <person name="Kanda K."/>
            <person name="Yokoi T."/>
            <person name="Furuya T."/>
            <person name="Kikkawa E."/>
            <person name="Omura Y."/>
            <person name="Abe K."/>
            <person name="Kamihara K."/>
            <person name="Katsuta N."/>
            <person name="Sato K."/>
            <person name="Tanikawa M."/>
            <person name="Yamazaki M."/>
            <person name="Ninomiya K."/>
            <person name="Ishibashi T."/>
            <person name="Yamashita H."/>
            <person name="Murakawa K."/>
            <person name="Fujimori K."/>
            <person name="Tanai H."/>
            <person name="Kimata M."/>
            <person name="Watanabe M."/>
            <person name="Hiraoka S."/>
            <person name="Chiba Y."/>
            <person name="Ishida S."/>
            <person name="Ono Y."/>
            <person name="Takiguchi S."/>
            <person name="Watanabe S."/>
            <person name="Yosida M."/>
            <person name="Hotuta T."/>
            <person name="Kusano J."/>
            <person name="Kanehori K."/>
            <person name="Takahashi-Fujii A."/>
            <person name="Hara H."/>
            <person name="Tanase T.-O."/>
            <person name="Nomura Y."/>
            <person name="Togiya S."/>
            <person name="Komai F."/>
            <person name="Hara R."/>
            <person name="Takeuchi K."/>
            <person name="Arita M."/>
            <person name="Imose N."/>
            <person name="Musashino K."/>
            <person name="Yuuki H."/>
            <person name="Oshima A."/>
            <person name="Sasaki N."/>
            <person name="Aotsuka S."/>
            <person name="Yoshikawa Y."/>
            <person name="Matsunawa H."/>
            <person name="Ichihara T."/>
            <person name="Shiohata N."/>
            <person name="Sano S."/>
            <person name="Moriya S."/>
            <person name="Momiyama H."/>
            <person name="Satoh N."/>
            <person name="Takami S."/>
            <person name="Terashima Y."/>
            <person name="Suzuki O."/>
            <person name="Nakagawa S."/>
            <person name="Senoh A."/>
            <person name="Mizoguchi H."/>
            <person name="Goto Y."/>
            <person name="Shimizu F."/>
            <person name="Wakebe H."/>
            <person name="Hishigaki H."/>
            <person name="Watanabe T."/>
            <person name="Sugiyama A."/>
            <person name="Takemoto M."/>
            <person name="Kawakami B."/>
            <person name="Yamazaki M."/>
            <person name="Watanabe K."/>
            <person name="Kumagai A."/>
            <person name="Itakura S."/>
            <person name="Fukuzumi Y."/>
            <person name="Fujimori Y."/>
            <person name="Komiyama M."/>
            <person name="Tashiro H."/>
            <person name="Tanigami A."/>
            <person name="Fujiwara T."/>
            <person name="Ono T."/>
            <person name="Yamada K."/>
            <person name="Fujii Y."/>
            <person name="Ozaki K."/>
            <person name="Hirao M."/>
            <person name="Ohmori Y."/>
            <person name="Kawabata A."/>
            <person name="Hikiji T."/>
            <person name="Kobatake N."/>
            <person name="Inagaki H."/>
            <person name="Ikema Y."/>
            <person name="Okamoto S."/>
            <person name="Okitani R."/>
            <person name="Kawakami T."/>
            <person name="Noguchi S."/>
            <person name="Itoh T."/>
            <person name="Shigeta K."/>
            <person name="Senba T."/>
            <person name="Matsumura K."/>
            <person name="Nakajima Y."/>
            <person name="Mizuno T."/>
            <person name="Morinaga M."/>
            <person name="Sasaki M."/>
            <person name="Togashi T."/>
            <person name="Oyama M."/>
            <person name="Hata H."/>
            <person name="Watanabe M."/>
            <person name="Komatsu T."/>
            <person name="Mizushima-Sugano J."/>
            <person name="Satoh T."/>
            <person name="Shirai Y."/>
            <person name="Takahashi Y."/>
            <person name="Nakagawa K."/>
            <person name="Okumura K."/>
            <person name="Nagase T."/>
            <person name="Nomura N."/>
            <person name="Kikuchi H."/>
            <person name="Masuho Y."/>
            <person name="Yamashita R."/>
            <person name="Nakai K."/>
            <person name="Yada T."/>
            <person name="Nakamura Y."/>
            <person name="Ohara O."/>
            <person name="Isogai T."/>
            <person name="Sugano S."/>
        </authorList>
    </citation>
    <scope>NUCLEOTIDE SEQUENCE [LARGE SCALE MRNA] (ISOFORM 2)</scope>
</reference>
<reference key="2">
    <citation type="journal article" date="2006" name="Nature">
        <title>Human chromosome 11 DNA sequence and analysis including novel gene identification.</title>
        <authorList>
            <person name="Taylor T.D."/>
            <person name="Noguchi H."/>
            <person name="Totoki Y."/>
            <person name="Toyoda A."/>
            <person name="Kuroki Y."/>
            <person name="Dewar K."/>
            <person name="Lloyd C."/>
            <person name="Itoh T."/>
            <person name="Takeda T."/>
            <person name="Kim D.-W."/>
            <person name="She X."/>
            <person name="Barlow K.F."/>
            <person name="Bloom T."/>
            <person name="Bruford E."/>
            <person name="Chang J.L."/>
            <person name="Cuomo C.A."/>
            <person name="Eichler E."/>
            <person name="FitzGerald M.G."/>
            <person name="Jaffe D.B."/>
            <person name="LaButti K."/>
            <person name="Nicol R."/>
            <person name="Park H.-S."/>
            <person name="Seaman C."/>
            <person name="Sougnez C."/>
            <person name="Yang X."/>
            <person name="Zimmer A.R."/>
            <person name="Zody M.C."/>
            <person name="Birren B.W."/>
            <person name="Nusbaum C."/>
            <person name="Fujiyama A."/>
            <person name="Hattori M."/>
            <person name="Rogers J."/>
            <person name="Lander E.S."/>
            <person name="Sakaki Y."/>
        </authorList>
    </citation>
    <scope>NUCLEOTIDE SEQUENCE [LARGE SCALE GENOMIC DNA]</scope>
</reference>
<reference key="3">
    <citation type="journal article" date="2004" name="Genome Res.">
        <title>The status, quality, and expansion of the NIH full-length cDNA project: the Mammalian Gene Collection (MGC).</title>
        <authorList>
            <consortium name="The MGC Project Team"/>
        </authorList>
    </citation>
    <scope>NUCLEOTIDE SEQUENCE [LARGE SCALE MRNA] (ISOFORM 1)</scope>
    <source>
        <tissue>Brain</tissue>
    </source>
</reference>
<reference key="4">
    <citation type="journal article" date="1998" name="J. Biol. Chem.">
        <title>PRMT 3, a type I protein arginine N-methyltransferase that differs from PRMT1 in its oligomerization, subcellular localization, substrate specificity, and regulation.</title>
        <authorList>
            <person name="Tang J."/>
            <person name="Gary J.D."/>
            <person name="Clarke S."/>
            <person name="Herschman H.R."/>
        </authorList>
    </citation>
    <scope>NUCLEOTIDE SEQUENCE [MRNA] OF 20-531 (ISOFORM 1)</scope>
</reference>
<reference key="5">
    <citation type="journal article" date="2004" name="Oncogene">
        <title>DAL-1/4.1B tumor suppressor interacts with protein arginine N-methyltransferase 3 (PRMT3) and inhibits its ability to methylate substrates in vitro and in vivo.</title>
        <authorList>
            <person name="Singh V."/>
            <person name="Miranda T.B."/>
            <person name="Jiang W."/>
            <person name="Frankel A."/>
            <person name="Roemer M.E."/>
            <person name="Robb V.A."/>
            <person name="Gutmann D.H."/>
            <person name="Herschman H.R."/>
            <person name="Clarke S."/>
            <person name="Newsham I.F."/>
        </authorList>
    </citation>
    <scope>INTERACTION WITH EPB41L3</scope>
</reference>
<reference key="6">
    <citation type="journal article" date="2008" name="Proc. Natl. Acad. Sci. U.S.A.">
        <title>A quantitative atlas of mitotic phosphorylation.</title>
        <authorList>
            <person name="Dephoure N."/>
            <person name="Zhou C."/>
            <person name="Villen J."/>
            <person name="Beausoleil S.A."/>
            <person name="Bakalarski C.E."/>
            <person name="Elledge S.J."/>
            <person name="Gygi S.P."/>
        </authorList>
    </citation>
    <scope>IDENTIFICATION BY MASS SPECTROMETRY [LARGE SCALE ANALYSIS]</scope>
    <source>
        <tissue>Cervix carcinoma</tissue>
    </source>
</reference>
<reference key="7">
    <citation type="journal article" date="2009" name="Anal. Chem.">
        <title>Lys-N and trypsin cover complementary parts of the phosphoproteome in a refined SCX-based approach.</title>
        <authorList>
            <person name="Gauci S."/>
            <person name="Helbig A.O."/>
            <person name="Slijper M."/>
            <person name="Krijgsveld J."/>
            <person name="Heck A.J."/>
            <person name="Mohammed S."/>
        </authorList>
    </citation>
    <scope>ACETYLATION [LARGE SCALE ANALYSIS] AT CYS-2</scope>
    <scope>CLEAVAGE OF INITIATOR METHIONINE [LARGE SCALE ANALYSIS]</scope>
    <scope>IDENTIFICATION BY MASS SPECTROMETRY [LARGE SCALE ANALYSIS]</scope>
</reference>
<reference key="8">
    <citation type="journal article" date="2009" name="Sci. Signal.">
        <title>Quantitative phosphoproteomic analysis of T cell receptor signaling reveals system-wide modulation of protein-protein interactions.</title>
        <authorList>
            <person name="Mayya V."/>
            <person name="Lundgren D.H."/>
            <person name="Hwang S.-I."/>
            <person name="Rezaul K."/>
            <person name="Wu L."/>
            <person name="Eng J.K."/>
            <person name="Rodionov V."/>
            <person name="Han D.K."/>
        </authorList>
    </citation>
    <scope>PHOSPHORYLATION [LARGE SCALE ANALYSIS] AT SER-25</scope>
    <scope>IDENTIFICATION BY MASS SPECTROMETRY [LARGE SCALE ANALYSIS]</scope>
    <source>
        <tissue>Leukemic T-cell</tissue>
    </source>
</reference>
<reference key="9">
    <citation type="journal article" date="2010" name="Sci. Signal.">
        <title>Quantitative phosphoproteomics reveals widespread full phosphorylation site occupancy during mitosis.</title>
        <authorList>
            <person name="Olsen J.V."/>
            <person name="Vermeulen M."/>
            <person name="Santamaria A."/>
            <person name="Kumar C."/>
            <person name="Miller M.L."/>
            <person name="Jensen L.J."/>
            <person name="Gnad F."/>
            <person name="Cox J."/>
            <person name="Jensen T.S."/>
            <person name="Nigg E.A."/>
            <person name="Brunak S."/>
            <person name="Mann M."/>
        </authorList>
    </citation>
    <scope>PHOSPHORYLATION [LARGE SCALE ANALYSIS] AT SER-25 AND SER-27</scope>
    <scope>IDENTIFICATION BY MASS SPECTROMETRY [LARGE SCALE ANALYSIS]</scope>
    <source>
        <tissue>Cervix carcinoma</tissue>
    </source>
</reference>
<reference key="10">
    <citation type="journal article" date="2011" name="BMC Syst. Biol.">
        <title>Initial characterization of the human central proteome.</title>
        <authorList>
            <person name="Burkard T.R."/>
            <person name="Planyavsky M."/>
            <person name="Kaupe I."/>
            <person name="Breitwieser F.P."/>
            <person name="Buerckstuemmer T."/>
            <person name="Bennett K.L."/>
            <person name="Superti-Furga G."/>
            <person name="Colinge J."/>
        </authorList>
    </citation>
    <scope>IDENTIFICATION BY MASS SPECTROMETRY [LARGE SCALE ANALYSIS]</scope>
</reference>
<reference key="11">
    <citation type="journal article" date="2011" name="Biochim. Biophys. Acta">
        <title>Tyrosine 87 is vital for the activity of human protein arginine methyltransferase 3 (PRMT3).</title>
        <authorList>
            <person name="Handrkova H."/>
            <person name="Petrak J."/>
            <person name="Halada P."/>
            <person name="Pospisilova D."/>
            <person name="Cmejla R."/>
        </authorList>
    </citation>
    <scope>PHOSPHORYLATION AT SER-25 AND SER-27</scope>
    <scope>MUTAGENESIS OF TYR-87</scope>
    <scope>ABSENCE OF PHOSPHORYLATION AT TYR-87</scope>
    <scope>INTERACTION WITH RPS2</scope>
</reference>
<reference key="12">
    <citation type="journal article" date="2011" name="Sci. Signal.">
        <title>System-wide temporal characterization of the proteome and phosphoproteome of human embryonic stem cell differentiation.</title>
        <authorList>
            <person name="Rigbolt K.T."/>
            <person name="Prokhorova T.A."/>
            <person name="Akimov V."/>
            <person name="Henningsen J."/>
            <person name="Johansen P.T."/>
            <person name="Kratchmarova I."/>
            <person name="Kassem M."/>
            <person name="Mann M."/>
            <person name="Olsen J.V."/>
            <person name="Blagoev B."/>
        </authorList>
    </citation>
    <scope>PHOSPHORYLATION [LARGE SCALE ANALYSIS] AT SER-25 AND SER-27</scope>
    <scope>IDENTIFICATION BY MASS SPECTROMETRY [LARGE SCALE ANALYSIS]</scope>
</reference>
<reference key="13">
    <citation type="journal article" date="2012" name="Mol. Cell. Proteomics">
        <title>Comparative large-scale characterisation of plant vs. mammal proteins reveals similar and idiosyncratic N-alpha acetylation features.</title>
        <authorList>
            <person name="Bienvenut W.V."/>
            <person name="Sumpton D."/>
            <person name="Martinez A."/>
            <person name="Lilla S."/>
            <person name="Espagne C."/>
            <person name="Meinnel T."/>
            <person name="Giglione C."/>
        </authorList>
    </citation>
    <scope>ACETYLATION [LARGE SCALE ANALYSIS] AT CYS-2</scope>
    <scope>CLEAVAGE OF INITIATOR METHIONINE [LARGE SCALE ANALYSIS]</scope>
    <scope>IDENTIFICATION BY MASS SPECTROMETRY [LARGE SCALE ANALYSIS]</scope>
</reference>
<reference key="14">
    <citation type="journal article" date="2012" name="Proc. Natl. Acad. Sci. U.S.A.">
        <title>N-terminal acetylome analyses and functional insights of the N-terminal acetyltransferase NatB.</title>
        <authorList>
            <person name="Van Damme P."/>
            <person name="Lasa M."/>
            <person name="Polevoda B."/>
            <person name="Gazquez C."/>
            <person name="Elosegui-Artola A."/>
            <person name="Kim D.S."/>
            <person name="De Juan-Pardo E."/>
            <person name="Demeyer K."/>
            <person name="Hole K."/>
            <person name="Larrea E."/>
            <person name="Timmerman E."/>
            <person name="Prieto J."/>
            <person name="Arnesen T."/>
            <person name="Sherman F."/>
            <person name="Gevaert K."/>
            <person name="Aldabe R."/>
        </authorList>
    </citation>
    <scope>ACETYLATION [LARGE SCALE ANALYSIS] AT CYS-2</scope>
    <scope>CLEAVAGE OF INITIATOR METHIONINE [LARGE SCALE ANALYSIS]</scope>
    <scope>IDENTIFICATION BY MASS SPECTROMETRY [LARGE SCALE ANALYSIS]</scope>
</reference>
<reference key="15">
    <citation type="journal article" date="2013" name="J. Proteome Res.">
        <title>Toward a comprehensive characterization of a human cancer cell phosphoproteome.</title>
        <authorList>
            <person name="Zhou H."/>
            <person name="Di Palma S."/>
            <person name="Preisinger C."/>
            <person name="Peng M."/>
            <person name="Polat A.N."/>
            <person name="Heck A.J."/>
            <person name="Mohammed S."/>
        </authorList>
    </citation>
    <scope>PHOSPHORYLATION [LARGE SCALE ANALYSIS] AT SER-25; SER-27 AND SER-171</scope>
    <scope>IDENTIFICATION BY MASS SPECTROMETRY [LARGE SCALE ANALYSIS]</scope>
    <source>
        <tissue>Erythroleukemia</tissue>
    </source>
</reference>
<reference key="16">
    <citation type="journal article" date="2019" name="Cell Death Dis.">
        <title>Asymmetrical methyltransferase PRMT3 regulates human mesenchymal stem cell osteogenesis via miR-3648.</title>
        <authorList>
            <person name="Min Z."/>
            <person name="Xiaomeng L."/>
            <person name="Zheng L."/>
            <person name="Yangge D."/>
            <person name="Xuejiao L."/>
            <person name="Longwei L."/>
            <person name="Xiao Z."/>
            <person name="Yunsong L."/>
            <person name="Ping Z."/>
            <person name="Yongsheng Z."/>
        </authorList>
    </citation>
    <scope>FUNCTION</scope>
    <scope>DEVELOPMENTAL STAGE</scope>
</reference>
<reference key="17">
    <citation type="journal article" date="2019" name="J. Biol. Chem.">
        <title>The 40S ribosomal protein uS5 (RPS2) assembles into an extraribosomal complex with human ZNF277 that competes with the PRMT3-uS5 interaction.</title>
        <authorList>
            <person name="Dionne K.L."/>
            <person name="Bergeron D."/>
            <person name="Landry-Voyer A.M."/>
            <person name="Bachand F."/>
        </authorList>
    </citation>
    <scope>INTERACTION WITH RPS2</scope>
</reference>
<reference key="18">
    <citation type="journal article" date="2021" name="Commun. Biol.">
        <title>PRMT3 interacts with ALDH1A1 and regulates gene-expression by inhibiting retinoic acid signaling.</title>
        <authorList>
            <person name="Verma M."/>
            <person name="Khan M.I.K."/>
            <person name="Kadumuri R.V."/>
            <person name="Chakrapani B."/>
            <person name="Awasthi S."/>
            <person name="Mahesh A."/>
            <person name="Govindaraju G."/>
            <person name="Chavali P.L."/>
            <person name="Rajavelu A."/>
            <person name="Chavali S."/>
            <person name="Dhayalan A."/>
        </authorList>
    </citation>
    <scope>FUNCTION</scope>
    <scope>CATALYTIC ACTIVITY</scope>
    <scope>INTERACTION WITH ALDH1A1</scope>
    <scope>SUBCELLULAR LOCATION</scope>
    <scope>REGION</scope>
    <scope>MUTAGENESIS OF GLU-338; HIS-464; ASN-465; ARG-466 AND VAL-468</scope>
</reference>
<reference key="19">
    <citation type="journal article" date="2024" name="Biochem. J.">
        <title>The uncharacterized protein ZNF200 interacts with PRMT3 and aids its stability and nuclear translocation.</title>
        <authorList>
            <person name="Gupta S."/>
            <person name="Verma M."/>
            <person name="Kadumuri R.V."/>
            <person name="Chutani N."/>
            <person name="Khan M.I.K."/>
            <person name="Chavali S."/>
            <person name="Dhayalan A."/>
        </authorList>
    </citation>
    <scope>FUNCTION</scope>
    <scope>CATALYTIC ACTIVITY</scope>
    <scope>INTERACTION WITH ZNF200</scope>
    <scope>SUBCELLULAR LOCATION</scope>
</reference>
<reference evidence="24" key="20">
    <citation type="submission" date="2006-03" db="PDB data bank">
        <title>The crystal structure of human HMT1 HNRNP methyltransferase-like 3 in complex with SAH.</title>
        <authorList>
            <consortium name="Structural genomics consortium (SGC)"/>
        </authorList>
    </citation>
    <scope>X-RAY CRYSTALLOGRAPHY (2.00 ANGSTROMS) OF 211-531 IN COMPLEX WITH S-ADENOSYL-L-HOMOCYSTEINE</scope>
</reference>
<reference evidence="25" key="21">
    <citation type="journal article" date="2012" name="Structure">
        <title>An allosteric inhibitor of protein arginine methyltransferase 3.</title>
        <authorList>
            <person name="Siarheyeva A."/>
            <person name="Senisterra G."/>
            <person name="Allali-Hassani A."/>
            <person name="Dong A."/>
            <person name="Dobrovetsky E."/>
            <person name="Wasney G.A."/>
            <person name="Chau I."/>
            <person name="Marcellus R."/>
            <person name="Hajian T."/>
            <person name="Liu F."/>
            <person name="Korboukh I."/>
            <person name="Smil D."/>
            <person name="Bolshan Y."/>
            <person name="Min J."/>
            <person name="Wu H."/>
            <person name="Zeng H."/>
            <person name="Loppnau P."/>
            <person name="Poda G."/>
            <person name="Griffin C."/>
            <person name="Aman A."/>
            <person name="Brown P.J."/>
            <person name="Jin J."/>
            <person name="Al-Awar R."/>
            <person name="Arrowsmith C.H."/>
            <person name="Schapira M."/>
            <person name="Vedadi M."/>
        </authorList>
    </citation>
    <scope>X-RAY CRYSTALLOGRAPHY (2.00 ANGSTROMS) OF 211-531 IN COMPLEX WITH INHIBITOR</scope>
    <scope>FUNCTION</scope>
    <scope>CATALYTIC ACTIVITY</scope>
    <scope>ACTIVITY REGULATION</scope>
    <scope>BIOPHYSICOCHEMICAL PROPERTIES</scope>
    <scope>MUTAGENESIS OF VAL-403</scope>
</reference>
<reference evidence="26" key="22">
    <citation type="journal article" date="2013" name="J. Med. Chem.">
        <title>Exploiting an allosteric binding site of PRMT3 yields potent and selective inhibitors.</title>
        <authorList>
            <person name="Liu F."/>
            <person name="Li F."/>
            <person name="Ma A."/>
            <person name="Dobrovetsky E."/>
            <person name="Dong A."/>
            <person name="Gao C."/>
            <person name="Korboukh I."/>
            <person name="Liu J."/>
            <person name="Smil D."/>
            <person name="Brown P.J."/>
            <person name="Frye S.V."/>
            <person name="Arrowsmith C.H."/>
            <person name="Schapira M."/>
            <person name="Vedadi M."/>
            <person name="Jin J."/>
        </authorList>
    </citation>
    <scope>X-RAY CRYSTALLOGRAPHY (2.30 ANGSTROMS) OF 211-531 IN COMPLEX WITH INHIBITOR</scope>
    <scope>FUNCTION</scope>
    <scope>CATALYTIC ACTIVITY</scope>
    <scope>ACTIVITY REGULATION</scope>
</reference>
<reference evidence="27" key="23">
    <citation type="journal article" date="2015" name="Angew. Chem. Int. Ed.">
        <title>A potent, selective and cell-active allosteric inhibitor of protein arginine methyltransferase 3 (PRMT3).</title>
        <authorList>
            <person name="Kaniskan H.U."/>
            <person name="Szewczyk M.M."/>
            <person name="Yu Z."/>
            <person name="Eram M.S."/>
            <person name="Yang X."/>
            <person name="Schmidt K."/>
            <person name="Luo X."/>
            <person name="Dai M."/>
            <person name="He F."/>
            <person name="Zang I."/>
            <person name="Lin Y."/>
            <person name="Kennedy S."/>
            <person name="Li F."/>
            <person name="Dobrovetsky E."/>
            <person name="Dong A."/>
            <person name="Smil D."/>
            <person name="Min S.J."/>
            <person name="Landon M."/>
            <person name="Lin-Jones J."/>
            <person name="Huang X.P."/>
            <person name="Roth B.L."/>
            <person name="Schapira M."/>
            <person name="Atadja P."/>
            <person name="Barsyte-Lovejoy D."/>
            <person name="Arrowsmith C.H."/>
            <person name="Brown P.J."/>
            <person name="Zhao K."/>
            <person name="Jin J."/>
            <person name="Vedadi M."/>
        </authorList>
    </citation>
    <scope>X-RAY CRYSTALLOGRAPHY (2.10 ANGSTROMS) OF 211-531 IN COMPLEX WITH INHIBITOR</scope>
    <scope>FUNCTION</scope>
    <scope>CATALYTIC ACTIVITY</scope>
    <scope>ACTIVITY REGULATION</scope>
    <scope>MUTAGENESIS OF GLU-338</scope>
</reference>
<organism>
    <name type="scientific">Homo sapiens</name>
    <name type="common">Human</name>
    <dbReference type="NCBI Taxonomy" id="9606"/>
    <lineage>
        <taxon>Eukaryota</taxon>
        <taxon>Metazoa</taxon>
        <taxon>Chordata</taxon>
        <taxon>Craniata</taxon>
        <taxon>Vertebrata</taxon>
        <taxon>Euteleostomi</taxon>
        <taxon>Mammalia</taxon>
        <taxon>Eutheria</taxon>
        <taxon>Euarchontoglires</taxon>
        <taxon>Primates</taxon>
        <taxon>Haplorrhini</taxon>
        <taxon>Catarrhini</taxon>
        <taxon>Hominidae</taxon>
        <taxon>Homo</taxon>
    </lineage>
</organism>
<evidence type="ECO:0000250" key="1">
    <source>
        <dbReference type="UniProtKB" id="O70467"/>
    </source>
</evidence>
<evidence type="ECO:0000250" key="2">
    <source>
        <dbReference type="UniProtKB" id="Q922H1"/>
    </source>
</evidence>
<evidence type="ECO:0000255" key="3">
    <source>
        <dbReference type="PROSITE-ProRule" id="PRU01015"/>
    </source>
</evidence>
<evidence type="ECO:0000256" key="4">
    <source>
        <dbReference type="SAM" id="MobiDB-lite"/>
    </source>
</evidence>
<evidence type="ECO:0000269" key="5">
    <source>
    </source>
</evidence>
<evidence type="ECO:0000269" key="6">
    <source>
    </source>
</evidence>
<evidence type="ECO:0000269" key="7">
    <source>
    </source>
</evidence>
<evidence type="ECO:0000269" key="8">
    <source>
    </source>
</evidence>
<evidence type="ECO:0000269" key="9">
    <source>
    </source>
</evidence>
<evidence type="ECO:0000269" key="10">
    <source>
    </source>
</evidence>
<evidence type="ECO:0000269" key="11">
    <source>
    </source>
</evidence>
<evidence type="ECO:0000269" key="12">
    <source>
    </source>
</evidence>
<evidence type="ECO:0000269" key="13">
    <source>
    </source>
</evidence>
<evidence type="ECO:0000269" key="14">
    <source>
    </source>
</evidence>
<evidence type="ECO:0000269" key="15">
    <source ref="20"/>
</evidence>
<evidence type="ECO:0000303" key="16">
    <source>
    </source>
</evidence>
<evidence type="ECO:0000305" key="17"/>
<evidence type="ECO:0000305" key="18">
    <source>
    </source>
</evidence>
<evidence type="ECO:0000305" key="19">
    <source>
    </source>
</evidence>
<evidence type="ECO:0000305" key="20">
    <source>
    </source>
</evidence>
<evidence type="ECO:0000305" key="21">
    <source>
    </source>
</evidence>
<evidence type="ECO:0000305" key="22">
    <source>
    </source>
</evidence>
<evidence type="ECO:0000312" key="23">
    <source>
        <dbReference type="HGNC" id="HGNC:30163"/>
    </source>
</evidence>
<evidence type="ECO:0007744" key="24">
    <source>
        <dbReference type="PDB" id="2FYT"/>
    </source>
</evidence>
<evidence type="ECO:0007744" key="25">
    <source>
        <dbReference type="PDB" id="3SMQ"/>
    </source>
</evidence>
<evidence type="ECO:0007744" key="26">
    <source>
        <dbReference type="PDB" id="4HSG"/>
    </source>
</evidence>
<evidence type="ECO:0007744" key="27">
    <source>
        <dbReference type="PDB" id="4RYL"/>
    </source>
</evidence>
<evidence type="ECO:0007744" key="28">
    <source>
    </source>
</evidence>
<evidence type="ECO:0007744" key="29">
    <source>
    </source>
</evidence>
<evidence type="ECO:0007744" key="30">
    <source>
    </source>
</evidence>
<evidence type="ECO:0007744" key="31">
    <source>
    </source>
</evidence>
<evidence type="ECO:0007744" key="32">
    <source>
    </source>
</evidence>
<evidence type="ECO:0007744" key="33">
    <source>
    </source>
</evidence>
<evidence type="ECO:0007744" key="34">
    <source>
    </source>
</evidence>
<evidence type="ECO:0007829" key="35">
    <source>
        <dbReference type="PDB" id="2FYT"/>
    </source>
</evidence>
<evidence type="ECO:0007829" key="36">
    <source>
        <dbReference type="PDB" id="3SMQ"/>
    </source>
</evidence>
<sequence length="531" mass="59903">MCSLASGATGGRGAVENEEDLPELSDSGDEAAWEDEDDADLPHGKQQTPCLFCNRLFTSAEETFSHCKSEHQFNIDSMVHKHGLEFYGYIKLINFIRLKNPTVEYMNSIYNPVPWEKEEYLKPVLEDDLLLQFDVEDLYEPVSVPFSYPNGLSENTSVVEKLKHMEARALSAEAALARAREDLQKMKQFAQDFVMHTDVRTCSSSTSVIADLQEDEDGVYFSSYGHYGIHEEMLKDKIRTESYRDFIYQNPHIFKDKVVLDVGCGTGILSMFAAKAGAKKVLGVDQSEILYQAMDIIRLNKLEDTITLIKGKIEEVHLPVEKVDVIISEWMGYFLLFESMLDSVLYAKNKYLAKGGSVYPDICTISLVAVSDVNKHADRIAFWDDVYGFKMSCMKKAVIPEAVVEVLDPKTLISEPCGIKHIDCHTTSISDLEFSSDFTLKITRTSMCTAIAGYFDIYFEKNCHNRVVFSTGPQSTKTHWKQTVFLLEKPFSVKAGEALKGKVTVHKNKKDPRSLTVTLTLNNSTQTYGLQ</sequence>
<proteinExistence type="evidence at protein level"/>
<keyword id="KW-0002">3D-structure</keyword>
<keyword id="KW-0007">Acetylation</keyword>
<keyword id="KW-0025">Alternative splicing</keyword>
<keyword id="KW-0963">Cytoplasm</keyword>
<keyword id="KW-0479">Metal-binding</keyword>
<keyword id="KW-0489">Methyltransferase</keyword>
<keyword id="KW-0539">Nucleus</keyword>
<keyword id="KW-0597">Phosphoprotein</keyword>
<keyword id="KW-1267">Proteomics identification</keyword>
<keyword id="KW-1185">Reference proteome</keyword>
<keyword id="KW-0949">S-adenosyl-L-methionine</keyword>
<keyword id="KW-0808">Transferase</keyword>
<keyword id="KW-0862">Zinc</keyword>
<keyword id="KW-0863">Zinc-finger</keyword>
<comment type="function">
    <text evidence="2 7 8 9 11 12 13">Protein-arginine N-methyltransferase that catalyzes both the monomethylation and asymmetric dimethylation of the guanidino nitrogens of arginine residues in target proteins, and therefore falls into the group of type I methyltransferases (PubMed:22795084, PubMed:23445220, PubMed:25728001, PubMed:31378783, PubMed:33495566, PubMed:39513743). Catalyzes the asymmetric arginine dimethylation at multiple sites in the Arg/Gly-rich region of small ribosomal subunit protein uS5/RPS2 (PubMed:22795084). Also appears to methylate other ribosomal proteins (By similarity). May regulate retinoic acid synthesis and signaling by inhibiting ALDH1A1 retinal dehydrogenase activity (PubMed:33495566). Contributes to methylation of histone H4 'Arg-3', a specific tag for epigenetic transcriptional activation (PubMed:25728001, PubMed:31378783, PubMed:39513743). Mediates asymmetric arginine dimethylation of histone H4 'Arg-3' (H4R3me2a) in the promoter region of miRNA miR-3648, to promote its transcription and osteogenesis (PubMed:31378783).</text>
</comment>
<comment type="catalytic activity">
    <reaction evidence="21">
        <text>L-arginyl-[protein] + S-adenosyl-L-methionine = N(omega)-methyl-L-arginyl-[protein] + S-adenosyl-L-homocysteine + H(+)</text>
        <dbReference type="Rhea" id="RHEA:48100"/>
        <dbReference type="Rhea" id="RHEA-COMP:10532"/>
        <dbReference type="Rhea" id="RHEA-COMP:11990"/>
        <dbReference type="ChEBI" id="CHEBI:15378"/>
        <dbReference type="ChEBI" id="CHEBI:29965"/>
        <dbReference type="ChEBI" id="CHEBI:57856"/>
        <dbReference type="ChEBI" id="CHEBI:59789"/>
        <dbReference type="ChEBI" id="CHEBI:65280"/>
    </reaction>
    <physiologicalReaction direction="left-to-right" evidence="21">
        <dbReference type="Rhea" id="RHEA:48101"/>
    </physiologicalReaction>
</comment>
<comment type="catalytic activity">
    <reaction evidence="18 19 20 21 22">
        <text>L-arginyl-[protein] + 2 S-adenosyl-L-methionine = N(omega),N(omega)-dimethyl-L-arginyl-[protein] + 2 S-adenosyl-L-homocysteine + 2 H(+)</text>
        <dbReference type="Rhea" id="RHEA:48096"/>
        <dbReference type="Rhea" id="RHEA-COMP:10532"/>
        <dbReference type="Rhea" id="RHEA-COMP:11991"/>
        <dbReference type="ChEBI" id="CHEBI:15378"/>
        <dbReference type="ChEBI" id="CHEBI:29965"/>
        <dbReference type="ChEBI" id="CHEBI:57856"/>
        <dbReference type="ChEBI" id="CHEBI:59789"/>
        <dbReference type="ChEBI" id="CHEBI:61897"/>
        <dbReference type="EC" id="2.1.1.319"/>
    </reaction>
    <physiologicalReaction direction="left-to-right" evidence="18 19 20 21 22">
        <dbReference type="Rhea" id="RHEA:48097"/>
    </physiologicalReaction>
</comment>
<comment type="activity regulation">
    <text evidence="1 7 8 9">Inhibited by N-ethylmaleimide and high concentrations of zinc chloride (By similarity). Allosterically inhibited by SGC707 (PubMed:25728001). Allosterically inhibited by (1-(benzo[d][1,2,3]thiadiazol- 6-yl)-3-(2-cyclohexenylethyl)urea) and derivatives thereof (PubMed:22795084, PubMed:23445220).</text>
</comment>
<comment type="biophysicochemical properties">
    <kinetics>
        <KM evidence="7">34 uM for S-adenosyl-L-methionine (at pH 8)</KM>
        <KM evidence="7">1 uM for RPS2 (at pH 8)</KM>
        <text evidence="7">kcat is 0.1 min(-1) with RPS2 as substrate (at pH 8).</text>
    </kinetics>
</comment>
<comment type="subunit">
    <text evidence="1 5 6 10 12 13">Monomer and homodimer (By similarity). Interacts with EPB41L3 (via FERM domain); the interaction is direct and inhibits the protein-arginine N-methyltransferase activity of PRMT3 (PubMed:15334060). Interacts with the 40S ribosomal protein RPS2 (PubMed:21059412, PubMed:30530495). Interacts with ALDH1A1; the interaction is direct, inhibits ALDH1A1 aldehyde dehydrogenase activity and is independent of the methyltransferase activity of PRMT3 (PubMed:33495566). Interacts (via zinc-finger) with ZNF200 (via C-terminus); the interaction is direct and required to localize PRMT3 to the nucleus and inhibit its proteasomal degradation (PubMed:39513743).</text>
</comment>
<comment type="interaction">
    <interactant intactId="EBI-2809009">
        <id>O60678</id>
    </interactant>
    <interactant intactId="EBI-10181188">
        <id>Q8N7W2-2</id>
        <label>BEND7</label>
    </interactant>
    <organismsDiffer>false</organismsDiffer>
    <experiments>3</experiments>
</comment>
<comment type="interaction">
    <interactant intactId="EBI-2809009">
        <id>O60678</id>
    </interactant>
    <interactant intactId="EBI-16439278">
        <id>Q6FHY5</id>
        <label>MEOX2</label>
    </interactant>
    <organismsDiffer>false</organismsDiffer>
    <experiments>3</experiments>
</comment>
<comment type="interaction">
    <interactant intactId="EBI-2809009">
        <id>O60678</id>
    </interactant>
    <interactant intactId="EBI-10232538">
        <id>Q8WWB5</id>
        <label>PIH1D2</label>
    </interactant>
    <organismsDiffer>false</organismsDiffer>
    <experiments>3</experiments>
</comment>
<comment type="interaction">
    <interactant intactId="EBI-2809009">
        <id>O60678</id>
    </interactant>
    <interactant intactId="EBI-443446">
        <id>P15880</id>
        <label>RPS2</label>
    </interactant>
    <organismsDiffer>false</organismsDiffer>
    <experiments>8</experiments>
</comment>
<comment type="subcellular location">
    <subcellularLocation>
        <location evidence="13 14">Cytoplasm</location>
        <location evidence="13 14">Cytosol</location>
    </subcellularLocation>
    <subcellularLocation>
        <location evidence="13">Nucleus</location>
    </subcellularLocation>
    <text evidence="13">Localized to the nucleus by ZNF200.</text>
</comment>
<comment type="alternative products">
    <event type="alternative splicing"/>
    <isoform>
        <id>O60678-1</id>
        <name>1</name>
        <sequence type="displayed"/>
    </isoform>
    <isoform>
        <id>O60678-2</id>
        <name>2</name>
        <sequence type="described" ref="VSP_040330"/>
    </isoform>
</comment>
<comment type="developmental stage">
    <text evidence="11">Induced during osteogenic differentiation of mesenchymal stem cells (at protein level).</text>
</comment>
<comment type="domain">
    <text evidence="1">The C2H2-type zinc-finger is responsible for substrate specificity.</text>
</comment>
<comment type="similarity">
    <text evidence="3">Belongs to the class I-like SAM-binding methyltransferase superfamily. Protein arginine N-methyltransferase family.</text>
</comment>
<dbReference type="EC" id="2.1.1.319" evidence="18 19 20 21 22"/>
<dbReference type="EMBL" id="AK300591">
    <property type="protein sequence ID" value="BAG62289.1"/>
    <property type="molecule type" value="mRNA"/>
</dbReference>
<dbReference type="EMBL" id="AC025972">
    <property type="status" value="NOT_ANNOTATED_CDS"/>
    <property type="molecule type" value="Genomic_DNA"/>
</dbReference>
<dbReference type="EMBL" id="AC108005">
    <property type="status" value="NOT_ANNOTATED_CDS"/>
    <property type="molecule type" value="Genomic_DNA"/>
</dbReference>
<dbReference type="EMBL" id="KC877394">
    <property type="status" value="NOT_ANNOTATED_CDS"/>
    <property type="molecule type" value="Genomic_DNA"/>
</dbReference>
<dbReference type="EMBL" id="KC877396">
    <property type="status" value="NOT_ANNOTATED_CDS"/>
    <property type="molecule type" value="Genomic_DNA"/>
</dbReference>
<dbReference type="EMBL" id="KF459543">
    <property type="status" value="NOT_ANNOTATED_CDS"/>
    <property type="molecule type" value="Genomic_DNA"/>
</dbReference>
<dbReference type="EMBL" id="BC037544">
    <property type="protein sequence ID" value="AAH37544.1"/>
    <property type="molecule type" value="mRNA"/>
</dbReference>
<dbReference type="EMBL" id="BC064831">
    <property type="protein sequence ID" value="AAH64831.1"/>
    <property type="molecule type" value="mRNA"/>
</dbReference>
<dbReference type="EMBL" id="AF059531">
    <property type="protein sequence ID" value="AAC39837.1"/>
    <property type="molecule type" value="mRNA"/>
</dbReference>
<dbReference type="CCDS" id="CCDS44554.1">
    <molecule id="O60678-2"/>
</dbReference>
<dbReference type="CCDS" id="CCDS7853.1">
    <molecule id="O60678-1"/>
</dbReference>
<dbReference type="RefSeq" id="NP_001138638.1">
    <molecule id="O60678-2"/>
    <property type="nucleotide sequence ID" value="NM_001145166.2"/>
</dbReference>
<dbReference type="RefSeq" id="NP_005779.1">
    <molecule id="O60678-1"/>
    <property type="nucleotide sequence ID" value="NM_005788.4"/>
</dbReference>
<dbReference type="PDB" id="2FYT">
    <property type="method" value="X-ray"/>
    <property type="resolution" value="2.00 A"/>
    <property type="chains" value="A=211-531"/>
</dbReference>
<dbReference type="PDB" id="3SMQ">
    <property type="method" value="X-ray"/>
    <property type="resolution" value="2.00 A"/>
    <property type="chains" value="A=211-531"/>
</dbReference>
<dbReference type="PDB" id="4HSG">
    <property type="method" value="X-ray"/>
    <property type="resolution" value="2.30 A"/>
    <property type="chains" value="A=211-531"/>
</dbReference>
<dbReference type="PDB" id="4QQN">
    <property type="method" value="X-ray"/>
    <property type="resolution" value="2.08 A"/>
    <property type="chains" value="A=211-531"/>
</dbReference>
<dbReference type="PDB" id="4RYL">
    <property type="method" value="X-ray"/>
    <property type="resolution" value="2.10 A"/>
    <property type="chains" value="A=211-531"/>
</dbReference>
<dbReference type="PDB" id="8G2F">
    <property type="method" value="X-ray"/>
    <property type="resolution" value="2.06 A"/>
    <property type="chains" value="A=211-531"/>
</dbReference>
<dbReference type="PDB" id="8G2G">
    <property type="method" value="X-ray"/>
    <property type="resolution" value="2.02 A"/>
    <property type="chains" value="A/B=211-531"/>
</dbReference>
<dbReference type="PDB" id="8SHB">
    <property type="method" value="X-ray"/>
    <property type="resolution" value="2.09 A"/>
    <property type="chains" value="A=211-531"/>
</dbReference>
<dbReference type="PDB" id="8SHR">
    <property type="method" value="X-ray"/>
    <property type="resolution" value="1.92 A"/>
    <property type="chains" value="A=211-531"/>
</dbReference>
<dbReference type="PDB" id="8SIO">
    <property type="method" value="X-ray"/>
    <property type="resolution" value="2.20 A"/>
    <property type="chains" value="A/B=211-531"/>
</dbReference>
<dbReference type="PDBsum" id="2FYT"/>
<dbReference type="PDBsum" id="3SMQ"/>
<dbReference type="PDBsum" id="4HSG"/>
<dbReference type="PDBsum" id="4QQN"/>
<dbReference type="PDBsum" id="4RYL"/>
<dbReference type="PDBsum" id="8G2F"/>
<dbReference type="PDBsum" id="8G2G"/>
<dbReference type="PDBsum" id="8SHB"/>
<dbReference type="PDBsum" id="8SHR"/>
<dbReference type="PDBsum" id="8SIO"/>
<dbReference type="SMR" id="O60678"/>
<dbReference type="BioGRID" id="115491">
    <property type="interactions" value="148"/>
</dbReference>
<dbReference type="FunCoup" id="O60678">
    <property type="interactions" value="3504"/>
</dbReference>
<dbReference type="IntAct" id="O60678">
    <property type="interactions" value="57"/>
</dbReference>
<dbReference type="MINT" id="O60678"/>
<dbReference type="STRING" id="9606.ENSP00000331879"/>
<dbReference type="BindingDB" id="O60678"/>
<dbReference type="ChEMBL" id="CHEMBL5891"/>
<dbReference type="DrugBank" id="DB01752">
    <property type="generic name" value="S-adenosyl-L-homocysteine"/>
</dbReference>
<dbReference type="GuidetoPHARMACOLOGY" id="1254"/>
<dbReference type="GlyGen" id="O60678">
    <property type="glycosylation" value="1 site, 1 O-linked glycan (1 site)"/>
</dbReference>
<dbReference type="iPTMnet" id="O60678"/>
<dbReference type="PhosphoSitePlus" id="O60678"/>
<dbReference type="SwissPalm" id="O60678"/>
<dbReference type="BioMuta" id="PRMT3"/>
<dbReference type="jPOST" id="O60678"/>
<dbReference type="MassIVE" id="O60678"/>
<dbReference type="PaxDb" id="9606-ENSP00000331879"/>
<dbReference type="PeptideAtlas" id="O60678"/>
<dbReference type="ProteomicsDB" id="49522">
    <molecule id="O60678-1"/>
</dbReference>
<dbReference type="ProteomicsDB" id="49523">
    <molecule id="O60678-2"/>
</dbReference>
<dbReference type="Pumba" id="O60678"/>
<dbReference type="ABCD" id="O60678">
    <property type="antibodies" value="2 sequenced antibodies"/>
</dbReference>
<dbReference type="Antibodypedia" id="1605">
    <property type="antibodies" value="346 antibodies from 32 providers"/>
</dbReference>
<dbReference type="DNASU" id="10196"/>
<dbReference type="Ensembl" id="ENST00000331079.11">
    <molecule id="O60678-1"/>
    <property type="protein sequence ID" value="ENSP00000331879.6"/>
    <property type="gene ID" value="ENSG00000185238.13"/>
</dbReference>
<dbReference type="Ensembl" id="ENST00000437750.2">
    <molecule id="O60678-2"/>
    <property type="protein sequence ID" value="ENSP00000397766.2"/>
    <property type="gene ID" value="ENSG00000185238.13"/>
</dbReference>
<dbReference type="GeneID" id="10196"/>
<dbReference type="KEGG" id="hsa:10196"/>
<dbReference type="MANE-Select" id="ENST00000331079.11">
    <property type="protein sequence ID" value="ENSP00000331879.6"/>
    <property type="RefSeq nucleotide sequence ID" value="NM_005788.4"/>
    <property type="RefSeq protein sequence ID" value="NP_005779.1"/>
</dbReference>
<dbReference type="UCSC" id="uc001mqb.4">
    <molecule id="O60678-1"/>
    <property type="organism name" value="human"/>
</dbReference>
<dbReference type="AGR" id="HGNC:30163"/>
<dbReference type="CTD" id="10196"/>
<dbReference type="DisGeNET" id="10196"/>
<dbReference type="GeneCards" id="PRMT3"/>
<dbReference type="HGNC" id="HGNC:30163">
    <property type="gene designation" value="PRMT3"/>
</dbReference>
<dbReference type="HPA" id="ENSG00000185238">
    <property type="expression patterns" value="Low tissue specificity"/>
</dbReference>
<dbReference type="MIM" id="603190">
    <property type="type" value="gene"/>
</dbReference>
<dbReference type="neXtProt" id="NX_O60678"/>
<dbReference type="OpenTargets" id="ENSG00000185238"/>
<dbReference type="PharmGKB" id="PA29462"/>
<dbReference type="VEuPathDB" id="HostDB:ENSG00000185238"/>
<dbReference type="eggNOG" id="KOG1499">
    <property type="taxonomic scope" value="Eukaryota"/>
</dbReference>
<dbReference type="GeneTree" id="ENSGT00940000156825"/>
<dbReference type="HOGENOM" id="CLU_017375_6_2_1"/>
<dbReference type="InParanoid" id="O60678"/>
<dbReference type="OMA" id="YSHFAIH"/>
<dbReference type="OrthoDB" id="7848332at2759"/>
<dbReference type="PAN-GO" id="O60678">
    <property type="GO annotations" value="0 GO annotations based on evolutionary models"/>
</dbReference>
<dbReference type="PhylomeDB" id="O60678"/>
<dbReference type="TreeFam" id="TF323587"/>
<dbReference type="BioCyc" id="MetaCyc:MONOMER66-43216"/>
<dbReference type="BRENDA" id="2.1.1.319">
    <property type="organism ID" value="2681"/>
</dbReference>
<dbReference type="PathwayCommons" id="O60678"/>
<dbReference type="Reactome" id="R-HSA-3214858">
    <property type="pathway name" value="RMTs methylate histone arginines"/>
</dbReference>
<dbReference type="Reactome" id="R-HSA-8876725">
    <property type="pathway name" value="Protein methylation"/>
</dbReference>
<dbReference type="SABIO-RK" id="O60678"/>
<dbReference type="SignaLink" id="O60678"/>
<dbReference type="SIGNOR" id="O60678"/>
<dbReference type="BioGRID-ORCS" id="10196">
    <property type="hits" value="17 hits in 1172 CRISPR screens"/>
</dbReference>
<dbReference type="ChiTaRS" id="PRMT3">
    <property type="organism name" value="human"/>
</dbReference>
<dbReference type="EvolutionaryTrace" id="O60678"/>
<dbReference type="GeneWiki" id="PRMT3"/>
<dbReference type="GenomeRNAi" id="10196"/>
<dbReference type="Pharos" id="O60678">
    <property type="development level" value="Tchem"/>
</dbReference>
<dbReference type="PRO" id="PR:O60678"/>
<dbReference type="Proteomes" id="UP000005640">
    <property type="component" value="Chromosome 11"/>
</dbReference>
<dbReference type="RNAct" id="O60678">
    <property type="molecule type" value="protein"/>
</dbReference>
<dbReference type="Bgee" id="ENSG00000185238">
    <property type="expression patterns" value="Expressed in ventricular zone and 189 other cell types or tissues"/>
</dbReference>
<dbReference type="ExpressionAtlas" id="O60678">
    <property type="expression patterns" value="baseline and differential"/>
</dbReference>
<dbReference type="GO" id="GO:0005737">
    <property type="term" value="C:cytoplasm"/>
    <property type="evidence" value="ECO:0000314"/>
    <property type="project" value="UniProtKB"/>
</dbReference>
<dbReference type="GO" id="GO:0005829">
    <property type="term" value="C:cytosol"/>
    <property type="evidence" value="ECO:0000304"/>
    <property type="project" value="Reactome"/>
</dbReference>
<dbReference type="GO" id="GO:0005634">
    <property type="term" value="C:nucleus"/>
    <property type="evidence" value="ECO:0000314"/>
    <property type="project" value="UniProtKB"/>
</dbReference>
<dbReference type="GO" id="GO:0044020">
    <property type="term" value="F:histone H4R3 methyltransferase activity"/>
    <property type="evidence" value="ECO:0000314"/>
    <property type="project" value="UniProtKB"/>
</dbReference>
<dbReference type="GO" id="GO:0042054">
    <property type="term" value="F:histone methyltransferase activity"/>
    <property type="evidence" value="ECO:0000318"/>
    <property type="project" value="GO_Central"/>
</dbReference>
<dbReference type="GO" id="GO:0008168">
    <property type="term" value="F:methyltransferase activity"/>
    <property type="evidence" value="ECO:0000314"/>
    <property type="project" value="UniProtKB"/>
</dbReference>
<dbReference type="GO" id="GO:0016274">
    <property type="term" value="F:protein-arginine N-methyltransferase activity"/>
    <property type="evidence" value="ECO:0000318"/>
    <property type="project" value="GO_Central"/>
</dbReference>
<dbReference type="GO" id="GO:0035242">
    <property type="term" value="F:protein-arginine omega-N asymmetric methyltransferase activity"/>
    <property type="evidence" value="ECO:0007669"/>
    <property type="project" value="Ensembl"/>
</dbReference>
<dbReference type="GO" id="GO:0035241">
    <property type="term" value="F:protein-arginine omega-N monomethyltransferase activity"/>
    <property type="evidence" value="ECO:0007669"/>
    <property type="project" value="RHEA"/>
</dbReference>
<dbReference type="GO" id="GO:0008270">
    <property type="term" value="F:zinc ion binding"/>
    <property type="evidence" value="ECO:0007669"/>
    <property type="project" value="UniProtKB-KW"/>
</dbReference>
<dbReference type="GO" id="GO:0006338">
    <property type="term" value="P:chromatin remodeling"/>
    <property type="evidence" value="ECO:0000318"/>
    <property type="project" value="GO_Central"/>
</dbReference>
<dbReference type="GO" id="GO:0032259">
    <property type="term" value="P:methylation"/>
    <property type="evidence" value="ECO:0007669"/>
    <property type="project" value="UniProtKB-KW"/>
</dbReference>
<dbReference type="GO" id="GO:0031397">
    <property type="term" value="P:negative regulation of protein ubiquitination"/>
    <property type="evidence" value="ECO:0000314"/>
    <property type="project" value="UniProtKB"/>
</dbReference>
<dbReference type="GO" id="GO:1900053">
    <property type="term" value="P:negative regulation of retinoic acid biosynthetic process"/>
    <property type="evidence" value="ECO:0000315"/>
    <property type="project" value="UniProtKB"/>
</dbReference>
<dbReference type="GO" id="GO:0045669">
    <property type="term" value="P:positive regulation of osteoblast differentiation"/>
    <property type="evidence" value="ECO:0000315"/>
    <property type="project" value="UniProtKB"/>
</dbReference>
<dbReference type="GO" id="GO:0006355">
    <property type="term" value="P:regulation of DNA-templated transcription"/>
    <property type="evidence" value="ECO:0000318"/>
    <property type="project" value="GO_Central"/>
</dbReference>
<dbReference type="GO" id="GO:0045815">
    <property type="term" value="P:transcription initiation-coupled chromatin remodeling"/>
    <property type="evidence" value="ECO:0000315"/>
    <property type="project" value="UniProtKB"/>
</dbReference>
<dbReference type="CDD" id="cd02440">
    <property type="entry name" value="AdoMet_MTases"/>
    <property type="match status" value="1"/>
</dbReference>
<dbReference type="FunFam" id="3.40.50.150:FF:000034">
    <property type="entry name" value="Protein arginine N-methyltransferase 3"/>
    <property type="match status" value="1"/>
</dbReference>
<dbReference type="FunFam" id="2.70.160.11:FF:000005">
    <property type="entry name" value="protein arginine N-methyltransferase 3 isoform X2"/>
    <property type="match status" value="1"/>
</dbReference>
<dbReference type="Gene3D" id="2.70.160.11">
    <property type="entry name" value="Hnrnp arginine n-methyltransferase1"/>
    <property type="match status" value="1"/>
</dbReference>
<dbReference type="Gene3D" id="3.40.50.150">
    <property type="entry name" value="Vaccinia Virus protein VP39"/>
    <property type="match status" value="1"/>
</dbReference>
<dbReference type="InterPro" id="IPR049482">
    <property type="entry name" value="ANM3-like_C2H2_Zf"/>
</dbReference>
<dbReference type="InterPro" id="IPR049009">
    <property type="entry name" value="ANM3_Znf-C2H2"/>
</dbReference>
<dbReference type="InterPro" id="IPR025799">
    <property type="entry name" value="Arg_MeTrfase"/>
</dbReference>
<dbReference type="InterPro" id="IPR055135">
    <property type="entry name" value="PRMT_dom"/>
</dbReference>
<dbReference type="InterPro" id="IPR029063">
    <property type="entry name" value="SAM-dependent_MTases_sf"/>
</dbReference>
<dbReference type="InterPro" id="IPR036236">
    <property type="entry name" value="Znf_C2H2_sf"/>
</dbReference>
<dbReference type="InterPro" id="IPR013087">
    <property type="entry name" value="Znf_C2H2_type"/>
</dbReference>
<dbReference type="PANTHER" id="PTHR11006">
    <property type="entry name" value="PROTEIN ARGININE N-METHYLTRANSFERASE"/>
    <property type="match status" value="1"/>
</dbReference>
<dbReference type="PANTHER" id="PTHR11006:SF53">
    <property type="entry name" value="PROTEIN ARGININE N-METHYLTRANSFERASE 3"/>
    <property type="match status" value="1"/>
</dbReference>
<dbReference type="Pfam" id="PF21137">
    <property type="entry name" value="ANM3_C2H2_Zf"/>
    <property type="match status" value="1"/>
</dbReference>
<dbReference type="Pfam" id="PF21336">
    <property type="entry name" value="ANM3_zf-C2H2"/>
    <property type="match status" value="1"/>
</dbReference>
<dbReference type="Pfam" id="PF06325">
    <property type="entry name" value="PrmA"/>
    <property type="match status" value="1"/>
</dbReference>
<dbReference type="Pfam" id="PF22528">
    <property type="entry name" value="PRMT_C"/>
    <property type="match status" value="1"/>
</dbReference>
<dbReference type="SUPFAM" id="SSF57667">
    <property type="entry name" value="beta-beta-alpha zinc fingers"/>
    <property type="match status" value="1"/>
</dbReference>
<dbReference type="SUPFAM" id="SSF53335">
    <property type="entry name" value="S-adenosyl-L-methionine-dependent methyltransferases"/>
    <property type="match status" value="1"/>
</dbReference>
<dbReference type="PROSITE" id="PS51678">
    <property type="entry name" value="SAM_MT_PRMT"/>
    <property type="match status" value="1"/>
</dbReference>
<dbReference type="PROSITE" id="PS00028">
    <property type="entry name" value="ZINC_FINGER_C2H2_1"/>
    <property type="match status" value="1"/>
</dbReference>